<organism>
    <name type="scientific">Caenorhabditis elegans</name>
    <dbReference type="NCBI Taxonomy" id="6239"/>
    <lineage>
        <taxon>Eukaryota</taxon>
        <taxon>Metazoa</taxon>
        <taxon>Ecdysozoa</taxon>
        <taxon>Nematoda</taxon>
        <taxon>Chromadorea</taxon>
        <taxon>Rhabditida</taxon>
        <taxon>Rhabditina</taxon>
        <taxon>Rhabditomorpha</taxon>
        <taxon>Rhabditoidea</taxon>
        <taxon>Rhabditidae</taxon>
        <taxon>Peloderinae</taxon>
        <taxon>Caenorhabditis</taxon>
    </lineage>
</organism>
<feature type="chain" id="PRO_0000104479" description="Serpentine receptor class alpha-13">
    <location>
        <begin position="1"/>
        <end position="335"/>
    </location>
</feature>
<feature type="topological domain" description="Extracellular" evidence="1">
    <location>
        <begin position="1"/>
        <end position="25"/>
    </location>
</feature>
<feature type="transmembrane region" description="Helical; Name=1" evidence="1">
    <location>
        <begin position="26"/>
        <end position="46"/>
    </location>
</feature>
<feature type="topological domain" description="Cytoplasmic" evidence="1">
    <location>
        <begin position="47"/>
        <end position="61"/>
    </location>
</feature>
<feature type="transmembrane region" description="Helical; Name=2" evidence="1">
    <location>
        <begin position="62"/>
        <end position="82"/>
    </location>
</feature>
<feature type="topological domain" description="Extracellular" evidence="1">
    <location>
        <begin position="83"/>
        <end position="108"/>
    </location>
</feature>
<feature type="transmembrane region" description="Helical; Name=3" evidence="1">
    <location>
        <begin position="109"/>
        <end position="129"/>
    </location>
</feature>
<feature type="topological domain" description="Cytoplasmic" evidence="1">
    <location>
        <begin position="130"/>
        <end position="146"/>
    </location>
</feature>
<feature type="transmembrane region" description="Helical; Name=4" evidence="1">
    <location>
        <begin position="147"/>
        <end position="167"/>
    </location>
</feature>
<feature type="topological domain" description="Extracellular" evidence="1">
    <location>
        <begin position="168"/>
        <end position="192"/>
    </location>
</feature>
<feature type="transmembrane region" description="Helical; Name=5" evidence="1">
    <location>
        <begin position="193"/>
        <end position="213"/>
    </location>
</feature>
<feature type="topological domain" description="Cytoplasmic" evidence="1">
    <location>
        <begin position="214"/>
        <end position="243"/>
    </location>
</feature>
<feature type="transmembrane region" description="Helical; Name=6" evidence="1">
    <location>
        <begin position="244"/>
        <end position="264"/>
    </location>
</feature>
<feature type="topological domain" description="Extracellular" evidence="1">
    <location>
        <begin position="265"/>
        <end position="278"/>
    </location>
</feature>
<feature type="transmembrane region" description="Helical; Name=7" evidence="1">
    <location>
        <begin position="279"/>
        <end position="299"/>
    </location>
</feature>
<feature type="topological domain" description="Cytoplasmic" evidence="1">
    <location>
        <begin position="300"/>
        <end position="335"/>
    </location>
</feature>
<feature type="splice variant" id="VSP_020527" description="In isoform b." evidence="3">
    <original>M</original>
    <variation>MATPSSTNSDISTTQ</variation>
    <location>
        <position position="1"/>
    </location>
</feature>
<feature type="splice variant" id="VSP_020528" description="In isoform b." evidence="3">
    <original>LSI</original>
    <variation>AVI</variation>
    <location>
        <begin position="157"/>
        <end position="159"/>
    </location>
</feature>
<feature type="splice variant" id="VSP_020529" description="In isoform b." evidence="3">
    <location>
        <begin position="160"/>
        <end position="335"/>
    </location>
</feature>
<accession>Q20618</accession>
<accession>Q7JM75</accession>
<protein>
    <recommendedName>
        <fullName>Serpentine receptor class alpha-13</fullName>
        <shortName>Protein sra-13</shortName>
    </recommendedName>
</protein>
<evidence type="ECO:0000255" key="1"/>
<evidence type="ECO:0000269" key="2">
    <source>
    </source>
</evidence>
<evidence type="ECO:0000305" key="3"/>
<dbReference type="EMBL" id="Z66520">
    <property type="protein sequence ID" value="CAA91390.2"/>
    <property type="molecule type" value="Genomic_DNA"/>
</dbReference>
<dbReference type="EMBL" id="Z66520">
    <property type="protein sequence ID" value="CAE48504.1"/>
    <property type="molecule type" value="Genomic_DNA"/>
</dbReference>
<dbReference type="PIR" id="T22450">
    <property type="entry name" value="T22450"/>
</dbReference>
<dbReference type="RefSeq" id="NP_001022186.1">
    <molecule id="Q20618-1"/>
    <property type="nucleotide sequence ID" value="NM_001027015.1"/>
</dbReference>
<dbReference type="RefSeq" id="NP_001022187.1">
    <property type="nucleotide sequence ID" value="NM_001027016.2"/>
</dbReference>
<dbReference type="SMR" id="Q20618"/>
<dbReference type="BioGRID" id="50808">
    <property type="interactions" value="1"/>
</dbReference>
<dbReference type="FunCoup" id="Q20618">
    <property type="interactions" value="11"/>
</dbReference>
<dbReference type="STRING" id="6239.F49E12.5a.1"/>
<dbReference type="PaxDb" id="6239-F49E12.5a"/>
<dbReference type="EnsemblMetazoa" id="F49E12.5a.1">
    <molecule id="Q20618-1"/>
    <property type="protein sequence ID" value="F49E12.5a.1"/>
    <property type="gene ID" value="WBGene00005039"/>
</dbReference>
<dbReference type="EnsemblMetazoa" id="F49E12.5b.1">
    <property type="protein sequence ID" value="F49E12.5b.1"/>
    <property type="gene ID" value="WBGene00005039"/>
</dbReference>
<dbReference type="GeneID" id="186058"/>
<dbReference type="KEGG" id="cel:CELE_F49E12.5"/>
<dbReference type="UCSC" id="F49E12.5b">
    <molecule id="Q20618-1"/>
    <property type="organism name" value="c. elegans"/>
</dbReference>
<dbReference type="AGR" id="WB:WBGene00005039"/>
<dbReference type="CTD" id="186058"/>
<dbReference type="WormBase" id="F49E12.5a">
    <molecule id="Q20618-1"/>
    <property type="protein sequence ID" value="CE35552"/>
    <property type="gene ID" value="WBGene00005039"/>
    <property type="gene designation" value="sra-13"/>
</dbReference>
<dbReference type="WormBase" id="F49E12.5b">
    <property type="protein sequence ID" value="CE35877"/>
    <property type="gene ID" value="WBGene00005039"/>
    <property type="gene designation" value="sra-13"/>
</dbReference>
<dbReference type="eggNOG" id="ENOG502TH2W">
    <property type="taxonomic scope" value="Eukaryota"/>
</dbReference>
<dbReference type="GeneTree" id="ENSGT00970000195848"/>
<dbReference type="HOGENOM" id="CLU_048025_0_1_1"/>
<dbReference type="InParanoid" id="Q20618"/>
<dbReference type="OMA" id="NHCGFYP"/>
<dbReference type="OrthoDB" id="5849660at2759"/>
<dbReference type="PhylomeDB" id="Q20618"/>
<dbReference type="SignaLink" id="Q20618"/>
<dbReference type="PRO" id="PR:Q20618"/>
<dbReference type="Proteomes" id="UP000001940">
    <property type="component" value="Chromosome II"/>
</dbReference>
<dbReference type="GO" id="GO:0016020">
    <property type="term" value="C:membrane"/>
    <property type="evidence" value="ECO:0000305"/>
    <property type="project" value="UniProtKB"/>
</dbReference>
<dbReference type="GO" id="GO:0004930">
    <property type="term" value="F:G protein-coupled receptor activity"/>
    <property type="evidence" value="ECO:0007669"/>
    <property type="project" value="InterPro"/>
</dbReference>
<dbReference type="GO" id="GO:0004984">
    <property type="term" value="F:olfactory receptor activity"/>
    <property type="evidence" value="ECO:0000315"/>
    <property type="project" value="UniProtKB"/>
</dbReference>
<dbReference type="GO" id="GO:0050907">
    <property type="term" value="P:detection of chemical stimulus involved in sensory perception"/>
    <property type="evidence" value="ECO:0000318"/>
    <property type="project" value="GO_Central"/>
</dbReference>
<dbReference type="GO" id="GO:0050911">
    <property type="term" value="P:detection of chemical stimulus involved in sensory perception of smell"/>
    <property type="evidence" value="ECO:0000315"/>
    <property type="project" value="UniProtKB"/>
</dbReference>
<dbReference type="GO" id="GO:0046580">
    <property type="term" value="P:negative regulation of Ras protein signal transduction"/>
    <property type="evidence" value="ECO:0000315"/>
    <property type="project" value="UniProtKB"/>
</dbReference>
<dbReference type="GO" id="GO:0032096">
    <property type="term" value="P:negative regulation of response to food"/>
    <property type="evidence" value="ECO:0000315"/>
    <property type="project" value="UniProtKB"/>
</dbReference>
<dbReference type="GO" id="GO:0040027">
    <property type="term" value="P:negative regulation of vulval development"/>
    <property type="evidence" value="ECO:0000315"/>
    <property type="project" value="UniProtKB"/>
</dbReference>
<dbReference type="InterPro" id="IPR000344">
    <property type="entry name" value="7TM_GPCR_serpentine_rcpt_Sra"/>
</dbReference>
<dbReference type="InterPro" id="IPR051080">
    <property type="entry name" value="Nematode_rcpt-like_serp_alpha"/>
</dbReference>
<dbReference type="PANTHER" id="PTHR31357">
    <property type="entry name" value="SERPENTINE RECEPTOR CLASS ALPHA-10"/>
    <property type="match status" value="1"/>
</dbReference>
<dbReference type="PANTHER" id="PTHR31357:SF15">
    <property type="entry name" value="SERPENTINE RECEPTOR CLASS ALPHA-13"/>
    <property type="match status" value="1"/>
</dbReference>
<dbReference type="Pfam" id="PF02117">
    <property type="entry name" value="7TM_GPCR_Sra"/>
    <property type="match status" value="1"/>
</dbReference>
<dbReference type="PRINTS" id="PR00697">
    <property type="entry name" value="TMPROTEINSRA"/>
</dbReference>
<dbReference type="SUPFAM" id="SSF81321">
    <property type="entry name" value="Family A G protein-coupled receptor-like"/>
    <property type="match status" value="1"/>
</dbReference>
<name>SRA13_CAEEL</name>
<sequence length="335" mass="38522">MAIISSVNRTCASESLLELYRSYKYILSTSFNIIIPIISLFFLVYAIKQLCAQSIIQYSTRVLLITTILFAVCHQIAYFCFKADLLYTMLFKLDQPCNLQHSSYDCRFITIATTTSNCGMALVQLAMSIDRVFALKFNRVYYKLKSIPGITLALITLSISFSMFFILTIDDPLSGYVNHCGFYPTYSQDKFHIFLDVTLYLAVFNFVFDIGLMYYSYQEILWKRSYSFVNRFQSRISLKCTQAIFIISICQCISNVLYSGLLSLLMKLGRYMSSADYNLSLSLAYTTPYSCLILPILICKVLEYIKKQRTVGILSLRNQKQSMEGHMAMINSAWK</sequence>
<keyword id="KW-0025">Alternative splicing</keyword>
<keyword id="KW-0472">Membrane</keyword>
<keyword id="KW-0552">Olfaction</keyword>
<keyword id="KW-0675">Receptor</keyword>
<keyword id="KW-1185">Reference proteome</keyword>
<keyword id="KW-0716">Sensory transduction</keyword>
<keyword id="KW-0812">Transmembrane</keyword>
<keyword id="KW-1133">Transmembrane helix</keyword>
<reference key="1">
    <citation type="journal article" date="1998" name="Science">
        <title>Genome sequence of the nematode C. elegans: a platform for investigating biology.</title>
        <authorList>
            <consortium name="The C. elegans sequencing consortium"/>
        </authorList>
    </citation>
    <scope>NUCLEOTIDE SEQUENCE [LARGE SCALE GENOMIC DNA]</scope>
    <scope>ALTERNATIVE SPLICING</scope>
    <source>
        <strain>Bristol N2</strain>
    </source>
</reference>
<reference key="2">
    <citation type="journal article" date="2003" name="Development">
        <title>The C. elegans G-protein-coupled receptor SRA-13 inhibits RAS/MAPK signalling during olfaction and vulval development.</title>
        <authorList>
            <person name="Battu G."/>
            <person name="Hoier E.F."/>
            <person name="Hajnal A."/>
        </authorList>
    </citation>
    <scope>FUNCTION</scope>
    <scope>TISSUE SPECIFICITY</scope>
</reference>
<gene>
    <name type="primary">sra-13</name>
    <name type="ORF">F49E12.5</name>
</gene>
<comment type="function">
    <text evidence="2">Chemosensory receptor that negatively regulates RAS/MAPK signaling during vulva induction and the negative regulation of olfaction of volitile attractants. Required for the suppression of vulval induction in response to food starvation. Signaling acts through the GPA-5 G-alpha protein subunit.</text>
</comment>
<comment type="subcellular location">
    <subcellularLocation>
        <location evidence="3">Membrane</location>
        <topology evidence="3">Multi-pass membrane protein</topology>
    </subcellularLocation>
</comment>
<comment type="alternative products">
    <event type="alternative splicing"/>
    <isoform>
        <id>Q20618-1</id>
        <name>a</name>
        <sequence type="displayed"/>
    </isoform>
    <isoform>
        <id>Q20618-2</id>
        <name>b</name>
        <sequence type="described" ref="VSP_020527 VSP_020528 VSP_020529"/>
    </isoform>
</comment>
<comment type="tissue specificity">
    <text evidence="2">Expressed in the AWA and AWC chemosensory neurons.</text>
</comment>
<comment type="similarity">
    <text evidence="3">Belongs to the nematode receptor-like protein sra family.</text>
</comment>
<proteinExistence type="evidence at transcript level"/>